<organism>
    <name type="scientific">Rattus norvegicus</name>
    <name type="common">Rat</name>
    <dbReference type="NCBI Taxonomy" id="10116"/>
    <lineage>
        <taxon>Eukaryota</taxon>
        <taxon>Metazoa</taxon>
        <taxon>Chordata</taxon>
        <taxon>Craniata</taxon>
        <taxon>Vertebrata</taxon>
        <taxon>Euteleostomi</taxon>
        <taxon>Mammalia</taxon>
        <taxon>Eutheria</taxon>
        <taxon>Euarchontoglires</taxon>
        <taxon>Glires</taxon>
        <taxon>Rodentia</taxon>
        <taxon>Myomorpha</taxon>
        <taxon>Muroidea</taxon>
        <taxon>Muridae</taxon>
        <taxon>Murinae</taxon>
        <taxon>Rattus</taxon>
    </lineage>
</organism>
<keyword id="KW-0053">Apoptosis</keyword>
<keyword id="KW-0175">Coiled coil</keyword>
<keyword id="KW-0333">Golgi apparatus</keyword>
<keyword id="KW-0472">Membrane</keyword>
<keyword id="KW-0597">Phosphoprotein</keyword>
<keyword id="KW-1185">Reference proteome</keyword>
<keyword id="KW-0735">Signal-anchor</keyword>
<keyword id="KW-0812">Transmembrane</keyword>
<keyword id="KW-1133">Transmembrane helix</keyword>
<feature type="chain" id="PRO_0000097197" description="Receptor-binding cancer antigen expressed on SiSo cells">
    <location>
        <begin position="1"/>
        <end position="213"/>
    </location>
</feature>
<feature type="topological domain" description="Extracellular" evidence="3">
    <location>
        <begin position="1"/>
        <end position="6"/>
    </location>
</feature>
<feature type="transmembrane region" description="Helical; Signal-anchor for type III membrane protein" evidence="3">
    <location>
        <begin position="7"/>
        <end position="27"/>
    </location>
</feature>
<feature type="topological domain" description="Cytoplasmic" evidence="3">
    <location>
        <begin position="28"/>
        <end position="213"/>
    </location>
</feature>
<feature type="region of interest" description="Disordered" evidence="4">
    <location>
        <begin position="179"/>
        <end position="213"/>
    </location>
</feature>
<feature type="coiled-coil region" evidence="3">
    <location>
        <begin position="168"/>
        <end position="209"/>
    </location>
</feature>
<feature type="compositionally biased region" description="Basic and acidic residues" evidence="4">
    <location>
        <begin position="179"/>
        <end position="206"/>
    </location>
</feature>
<feature type="modified residue" description="Phosphoserine" evidence="5 6">
    <location>
        <position position="36"/>
    </location>
</feature>
<feature type="modified residue" description="Phosphothreonine" evidence="2">
    <location>
        <position position="41"/>
    </location>
</feature>
<feature type="modified residue" description="Phosphotyrosine" evidence="2">
    <location>
        <position position="94"/>
    </location>
</feature>
<gene>
    <name type="primary">Ebag9</name>
</gene>
<sequence length="213" mass="24187">MAITQFRLFKVCTCLATVLSFLKRLICRSGRGRKLSGDQITLPTTVDYSSVPKQTDVEEWTSWDEDAPTSVKIEGGTGNAAAQQNSLEQLEPDYFKDMTPTIRKTQKIVIKKREPLSFGVPDGSTGFSSRLAATQDMPFIHQSSELGDLDTWQENSNAWEEEEDAAWQAEEVLRQQKIADREKRAAEQQRKKMEKEAQRLLKKEQNKMGVKLS</sequence>
<protein>
    <recommendedName>
        <fullName>Receptor-binding cancer antigen expressed on SiSo cells</fullName>
    </recommendedName>
    <alternativeName>
        <fullName>Estrogen receptor-binding fragment-associated gene 9 protein</fullName>
    </alternativeName>
</protein>
<accession>Q5PQP2</accession>
<reference key="1">
    <citation type="journal article" date="2004" name="Genome Res.">
        <title>The status, quality, and expansion of the NIH full-length cDNA project: the Mammalian Gene Collection (MGC).</title>
        <authorList>
            <consortium name="The MGC Project Team"/>
        </authorList>
    </citation>
    <scope>NUCLEOTIDE SEQUENCE [LARGE SCALE MRNA]</scope>
    <source>
        <tissue>Heart</tissue>
    </source>
</reference>
<reference key="2">
    <citation type="journal article" date="2006" name="J. Proteome Res.">
        <title>Phosphoproteomic analysis of rat liver by high capacity IMAC and LC-MS/MS.</title>
        <authorList>
            <person name="Moser K."/>
            <person name="White F.M."/>
        </authorList>
    </citation>
    <scope>PHOSPHORYLATION [LARGE SCALE ANALYSIS] AT SER-36</scope>
    <scope>IDENTIFICATION BY MASS SPECTROMETRY [LARGE SCALE ANALYSIS]</scope>
</reference>
<reference key="3">
    <citation type="journal article" date="2012" name="Nat. Commun.">
        <title>Quantitative maps of protein phosphorylation sites across 14 different rat organs and tissues.</title>
        <authorList>
            <person name="Lundby A."/>
            <person name="Secher A."/>
            <person name="Lage K."/>
            <person name="Nordsborg N.B."/>
            <person name="Dmytriyev A."/>
            <person name="Lundby C."/>
            <person name="Olsen J.V."/>
        </authorList>
    </citation>
    <scope>PHOSPHORYLATION [LARGE SCALE ANALYSIS] AT SER-36</scope>
    <scope>IDENTIFICATION BY MASS SPECTROMETRY [LARGE SCALE ANALYSIS]</scope>
</reference>
<evidence type="ECO:0000250" key="1"/>
<evidence type="ECO:0000250" key="2">
    <source>
        <dbReference type="UniProtKB" id="O00559"/>
    </source>
</evidence>
<evidence type="ECO:0000255" key="3"/>
<evidence type="ECO:0000256" key="4">
    <source>
        <dbReference type="SAM" id="MobiDB-lite"/>
    </source>
</evidence>
<evidence type="ECO:0007744" key="5">
    <source>
    </source>
</evidence>
<evidence type="ECO:0007744" key="6">
    <source>
    </source>
</evidence>
<comment type="function">
    <text evidence="1">May participate in suppression of cell proliferation and induces apoptotic cell death through activation of interleukin-1-beta converting enzyme (ICE)-like proteases.</text>
</comment>
<comment type="subunit">
    <text evidence="1">Homodimer.</text>
</comment>
<comment type="subcellular location">
    <subcellularLocation>
        <location evidence="1">Golgi apparatus membrane</location>
        <topology evidence="1">Single-pass type III membrane protein</topology>
    </subcellularLocation>
    <text evidence="1">Predominantly located in the Golgi.</text>
</comment>
<comment type="domain">
    <text evidence="1">The coiled coil domain is necessary for the homodimerization.</text>
</comment>
<dbReference type="EMBL" id="BC087093">
    <property type="protein sequence ID" value="AAH87093.1"/>
    <property type="molecule type" value="mRNA"/>
</dbReference>
<dbReference type="RefSeq" id="NP_001009665.1">
    <property type="nucleotide sequence ID" value="NM_001009665.1"/>
</dbReference>
<dbReference type="RefSeq" id="XP_006241675.1">
    <property type="nucleotide sequence ID" value="XM_006241613.3"/>
</dbReference>
<dbReference type="RefSeq" id="XP_063119312.1">
    <property type="nucleotide sequence ID" value="XM_063263242.1"/>
</dbReference>
<dbReference type="SMR" id="Q5PQP2"/>
<dbReference type="FunCoup" id="Q5PQP2">
    <property type="interactions" value="2015"/>
</dbReference>
<dbReference type="IntAct" id="Q5PQP2">
    <property type="interactions" value="1"/>
</dbReference>
<dbReference type="STRING" id="10116.ENSRNOP00000005705"/>
<dbReference type="iPTMnet" id="Q5PQP2"/>
<dbReference type="PhosphoSitePlus" id="Q5PQP2"/>
<dbReference type="SwissPalm" id="Q5PQP2"/>
<dbReference type="PaxDb" id="10116-ENSRNOP00000005705"/>
<dbReference type="Ensembl" id="ENSRNOT00000105146.1">
    <property type="protein sequence ID" value="ENSRNOP00000079314.1"/>
    <property type="gene ID" value="ENSRNOG00000004220.6"/>
</dbReference>
<dbReference type="GeneID" id="299864"/>
<dbReference type="KEGG" id="rno:299864"/>
<dbReference type="UCSC" id="RGD:1307293">
    <property type="organism name" value="rat"/>
</dbReference>
<dbReference type="AGR" id="RGD:1307293"/>
<dbReference type="CTD" id="9166"/>
<dbReference type="RGD" id="1307293">
    <property type="gene designation" value="Ebag9"/>
</dbReference>
<dbReference type="eggNOG" id="ENOG502QSN4">
    <property type="taxonomic scope" value="Eukaryota"/>
</dbReference>
<dbReference type="GeneTree" id="ENSGT00390000004040"/>
<dbReference type="HOGENOM" id="CLU_094995_0_0_1"/>
<dbReference type="InParanoid" id="Q5PQP2"/>
<dbReference type="OrthoDB" id="55282at9989"/>
<dbReference type="PhylomeDB" id="Q5PQP2"/>
<dbReference type="TreeFam" id="TF326584"/>
<dbReference type="PRO" id="PR:Q5PQP2"/>
<dbReference type="Proteomes" id="UP000002494">
    <property type="component" value="Chromosome 7"/>
</dbReference>
<dbReference type="Bgee" id="ENSRNOG00000004220">
    <property type="expression patterns" value="Expressed in pancreas and 20 other cell types or tissues"/>
</dbReference>
<dbReference type="GO" id="GO:0005794">
    <property type="term" value="C:Golgi apparatus"/>
    <property type="evidence" value="ECO:0000266"/>
    <property type="project" value="RGD"/>
</dbReference>
<dbReference type="GO" id="GO:0000139">
    <property type="term" value="C:Golgi membrane"/>
    <property type="evidence" value="ECO:0007669"/>
    <property type="project" value="UniProtKB-SubCell"/>
</dbReference>
<dbReference type="GO" id="GO:0030141">
    <property type="term" value="C:secretory granule"/>
    <property type="evidence" value="ECO:0000314"/>
    <property type="project" value="RGD"/>
</dbReference>
<dbReference type="GO" id="GO:0090717">
    <property type="term" value="P:adaptive immune memory response involving T cells and B cells"/>
    <property type="evidence" value="ECO:0000266"/>
    <property type="project" value="RGD"/>
</dbReference>
<dbReference type="GO" id="GO:0006915">
    <property type="term" value="P:apoptotic process"/>
    <property type="evidence" value="ECO:0007669"/>
    <property type="project" value="UniProtKB-KW"/>
</dbReference>
<dbReference type="GO" id="GO:0001913">
    <property type="term" value="P:T cell mediated cytotoxicity"/>
    <property type="evidence" value="ECO:0000266"/>
    <property type="project" value="RGD"/>
</dbReference>
<dbReference type="InterPro" id="IPR017025">
    <property type="entry name" value="Cancer-assoc_antigen_RCAS1"/>
</dbReference>
<dbReference type="PANTHER" id="PTHR15208:SF2">
    <property type="entry name" value="RECEPTOR-BINDING CANCER ANTIGEN EXPRESSED ON SISO CELLS"/>
    <property type="match status" value="1"/>
</dbReference>
<dbReference type="PANTHER" id="PTHR15208">
    <property type="entry name" value="RECEPTOR-BINDING CANCER ANTIGEN EXPRESSED ON SISO CELLS CANCER ASSOCIATED SURFACE ANTIGEN RCAS1 ESTROGEN RECEPTOR-BINDING FRAGMENT- ASSOCIATED GENE 9 PROTEIN"/>
    <property type="match status" value="1"/>
</dbReference>
<dbReference type="PIRSF" id="PIRSF034247">
    <property type="entry name" value="RCAS1"/>
    <property type="match status" value="1"/>
</dbReference>
<name>RCAS1_RAT</name>
<proteinExistence type="evidence at protein level"/>